<sequence length="461" mass="52184">MLKIFNTLTRQKEEFKPIHAGEVGMYVCGITVYDLCHIGHGRTFVAFDVVARYLRFLGYKLKYVRNITDIDDKIIKRANENGESFVALVDRMIAEMHKDFDALNILRPDMEPRATHHIAEIIELTEQLIAKGHAYVADNGDVMFDVPTDPTYGVLSRQDLDQLQAGARVDVVDDKRNPMDFVLWKMSKEGEPSWPSPWGAGRPGWHIECSAMNCKQLGNHFDIHGGGSDLMFPHHENEIAQSTCAHDGQYVNYWMHSGMVMVDREKMSKSLGNFFTVRDVLKYYDAETVRYFLMSGHYRSQLNYSEENLKQARAALERLYTALRGTDKTVAPAGGEAFEARFIEAMDDDFNTPEAYSVLFDMAREVNRLKAEDMAAANAMASHLRKLSAVLGLLEQEPEAFLQSGAQADDSEVAEIEALIQQRLDARKAKDWAAADAARDRLNEMGIVLEDGPQGTTWRRK</sequence>
<keyword id="KW-0030">Aminoacyl-tRNA synthetase</keyword>
<keyword id="KW-0067">ATP-binding</keyword>
<keyword id="KW-0963">Cytoplasm</keyword>
<keyword id="KW-0436">Ligase</keyword>
<keyword id="KW-0479">Metal-binding</keyword>
<keyword id="KW-0547">Nucleotide-binding</keyword>
<keyword id="KW-0648">Protein biosynthesis</keyword>
<keyword id="KW-0862">Zinc</keyword>
<gene>
    <name evidence="1" type="primary">cysS</name>
    <name type="ordered locus">ECIAI39_0491</name>
</gene>
<reference key="1">
    <citation type="journal article" date="2009" name="PLoS Genet.">
        <title>Organised genome dynamics in the Escherichia coli species results in highly diverse adaptive paths.</title>
        <authorList>
            <person name="Touchon M."/>
            <person name="Hoede C."/>
            <person name="Tenaillon O."/>
            <person name="Barbe V."/>
            <person name="Baeriswyl S."/>
            <person name="Bidet P."/>
            <person name="Bingen E."/>
            <person name="Bonacorsi S."/>
            <person name="Bouchier C."/>
            <person name="Bouvet O."/>
            <person name="Calteau A."/>
            <person name="Chiapello H."/>
            <person name="Clermont O."/>
            <person name="Cruveiller S."/>
            <person name="Danchin A."/>
            <person name="Diard M."/>
            <person name="Dossat C."/>
            <person name="Karoui M.E."/>
            <person name="Frapy E."/>
            <person name="Garry L."/>
            <person name="Ghigo J.M."/>
            <person name="Gilles A.M."/>
            <person name="Johnson J."/>
            <person name="Le Bouguenec C."/>
            <person name="Lescat M."/>
            <person name="Mangenot S."/>
            <person name="Martinez-Jehanne V."/>
            <person name="Matic I."/>
            <person name="Nassif X."/>
            <person name="Oztas S."/>
            <person name="Petit M.A."/>
            <person name="Pichon C."/>
            <person name="Rouy Z."/>
            <person name="Ruf C.S."/>
            <person name="Schneider D."/>
            <person name="Tourret J."/>
            <person name="Vacherie B."/>
            <person name="Vallenet D."/>
            <person name="Medigue C."/>
            <person name="Rocha E.P.C."/>
            <person name="Denamur E."/>
        </authorList>
    </citation>
    <scope>NUCLEOTIDE SEQUENCE [LARGE SCALE GENOMIC DNA]</scope>
    <source>
        <strain>IAI39 / ExPEC</strain>
    </source>
</reference>
<dbReference type="EC" id="6.1.1.16" evidence="1"/>
<dbReference type="EMBL" id="CU928164">
    <property type="protein sequence ID" value="CAR16629.1"/>
    <property type="molecule type" value="Genomic_DNA"/>
</dbReference>
<dbReference type="RefSeq" id="WP_000912345.1">
    <property type="nucleotide sequence ID" value="NC_011750.1"/>
</dbReference>
<dbReference type="RefSeq" id="YP_002406522.1">
    <property type="nucleotide sequence ID" value="NC_011750.1"/>
</dbReference>
<dbReference type="SMR" id="B7NL20"/>
<dbReference type="STRING" id="585057.ECIAI39_0491"/>
<dbReference type="GeneID" id="75204392"/>
<dbReference type="KEGG" id="ect:ECIAI39_0491"/>
<dbReference type="PATRIC" id="fig|585057.6.peg.521"/>
<dbReference type="HOGENOM" id="CLU_013528_0_1_6"/>
<dbReference type="Proteomes" id="UP000000749">
    <property type="component" value="Chromosome"/>
</dbReference>
<dbReference type="GO" id="GO:0005829">
    <property type="term" value="C:cytosol"/>
    <property type="evidence" value="ECO:0007669"/>
    <property type="project" value="TreeGrafter"/>
</dbReference>
<dbReference type="GO" id="GO:0005524">
    <property type="term" value="F:ATP binding"/>
    <property type="evidence" value="ECO:0007669"/>
    <property type="project" value="UniProtKB-UniRule"/>
</dbReference>
<dbReference type="GO" id="GO:0004817">
    <property type="term" value="F:cysteine-tRNA ligase activity"/>
    <property type="evidence" value="ECO:0007669"/>
    <property type="project" value="UniProtKB-UniRule"/>
</dbReference>
<dbReference type="GO" id="GO:0008270">
    <property type="term" value="F:zinc ion binding"/>
    <property type="evidence" value="ECO:0007669"/>
    <property type="project" value="UniProtKB-UniRule"/>
</dbReference>
<dbReference type="GO" id="GO:0006423">
    <property type="term" value="P:cysteinyl-tRNA aminoacylation"/>
    <property type="evidence" value="ECO:0007669"/>
    <property type="project" value="UniProtKB-UniRule"/>
</dbReference>
<dbReference type="CDD" id="cd07963">
    <property type="entry name" value="Anticodon_Ia_Cys"/>
    <property type="match status" value="1"/>
</dbReference>
<dbReference type="CDD" id="cd00672">
    <property type="entry name" value="CysRS_core"/>
    <property type="match status" value="1"/>
</dbReference>
<dbReference type="FunFam" id="1.20.120.1910:FF:000001">
    <property type="entry name" value="Cysteine--tRNA ligase"/>
    <property type="match status" value="1"/>
</dbReference>
<dbReference type="FunFam" id="3.40.50.620:FF:000009">
    <property type="entry name" value="Cysteine--tRNA ligase"/>
    <property type="match status" value="1"/>
</dbReference>
<dbReference type="Gene3D" id="1.20.120.1910">
    <property type="entry name" value="Cysteine-tRNA ligase, C-terminal anti-codon recognition domain"/>
    <property type="match status" value="1"/>
</dbReference>
<dbReference type="Gene3D" id="3.40.50.620">
    <property type="entry name" value="HUPs"/>
    <property type="match status" value="1"/>
</dbReference>
<dbReference type="HAMAP" id="MF_00041">
    <property type="entry name" value="Cys_tRNA_synth"/>
    <property type="match status" value="1"/>
</dbReference>
<dbReference type="InterPro" id="IPR015803">
    <property type="entry name" value="Cys-tRNA-ligase"/>
</dbReference>
<dbReference type="InterPro" id="IPR015273">
    <property type="entry name" value="Cys-tRNA-synt_Ia_DALR"/>
</dbReference>
<dbReference type="InterPro" id="IPR024909">
    <property type="entry name" value="Cys-tRNA/MSH_ligase"/>
</dbReference>
<dbReference type="InterPro" id="IPR056411">
    <property type="entry name" value="CysS_C"/>
</dbReference>
<dbReference type="InterPro" id="IPR014729">
    <property type="entry name" value="Rossmann-like_a/b/a_fold"/>
</dbReference>
<dbReference type="InterPro" id="IPR032678">
    <property type="entry name" value="tRNA-synt_1_cat_dom"/>
</dbReference>
<dbReference type="InterPro" id="IPR009080">
    <property type="entry name" value="tRNAsynth_Ia_anticodon-bd"/>
</dbReference>
<dbReference type="NCBIfam" id="TIGR00435">
    <property type="entry name" value="cysS"/>
    <property type="match status" value="1"/>
</dbReference>
<dbReference type="PANTHER" id="PTHR10890:SF3">
    <property type="entry name" value="CYSTEINE--TRNA LIGASE, CYTOPLASMIC"/>
    <property type="match status" value="1"/>
</dbReference>
<dbReference type="PANTHER" id="PTHR10890">
    <property type="entry name" value="CYSTEINYL-TRNA SYNTHETASE"/>
    <property type="match status" value="1"/>
</dbReference>
<dbReference type="Pfam" id="PF23493">
    <property type="entry name" value="CysS_C"/>
    <property type="match status" value="1"/>
</dbReference>
<dbReference type="Pfam" id="PF09190">
    <property type="entry name" value="DALR_2"/>
    <property type="match status" value="1"/>
</dbReference>
<dbReference type="Pfam" id="PF01406">
    <property type="entry name" value="tRNA-synt_1e"/>
    <property type="match status" value="1"/>
</dbReference>
<dbReference type="PRINTS" id="PR00983">
    <property type="entry name" value="TRNASYNTHCYS"/>
</dbReference>
<dbReference type="SMART" id="SM00840">
    <property type="entry name" value="DALR_2"/>
    <property type="match status" value="1"/>
</dbReference>
<dbReference type="SUPFAM" id="SSF47323">
    <property type="entry name" value="Anticodon-binding domain of a subclass of class I aminoacyl-tRNA synthetases"/>
    <property type="match status" value="1"/>
</dbReference>
<dbReference type="SUPFAM" id="SSF52374">
    <property type="entry name" value="Nucleotidylyl transferase"/>
    <property type="match status" value="1"/>
</dbReference>
<comment type="catalytic activity">
    <reaction evidence="1">
        <text>tRNA(Cys) + L-cysteine + ATP = L-cysteinyl-tRNA(Cys) + AMP + diphosphate</text>
        <dbReference type="Rhea" id="RHEA:17773"/>
        <dbReference type="Rhea" id="RHEA-COMP:9661"/>
        <dbReference type="Rhea" id="RHEA-COMP:9679"/>
        <dbReference type="ChEBI" id="CHEBI:30616"/>
        <dbReference type="ChEBI" id="CHEBI:33019"/>
        <dbReference type="ChEBI" id="CHEBI:35235"/>
        <dbReference type="ChEBI" id="CHEBI:78442"/>
        <dbReference type="ChEBI" id="CHEBI:78517"/>
        <dbReference type="ChEBI" id="CHEBI:456215"/>
        <dbReference type="EC" id="6.1.1.16"/>
    </reaction>
</comment>
<comment type="cofactor">
    <cofactor evidence="1">
        <name>Zn(2+)</name>
        <dbReference type="ChEBI" id="CHEBI:29105"/>
    </cofactor>
    <text evidence="1">Binds 1 zinc ion per subunit.</text>
</comment>
<comment type="subunit">
    <text evidence="1">Monomer.</text>
</comment>
<comment type="subcellular location">
    <subcellularLocation>
        <location evidence="1">Cytoplasm</location>
    </subcellularLocation>
</comment>
<comment type="similarity">
    <text evidence="1">Belongs to the class-I aminoacyl-tRNA synthetase family.</text>
</comment>
<organism>
    <name type="scientific">Escherichia coli O7:K1 (strain IAI39 / ExPEC)</name>
    <dbReference type="NCBI Taxonomy" id="585057"/>
    <lineage>
        <taxon>Bacteria</taxon>
        <taxon>Pseudomonadati</taxon>
        <taxon>Pseudomonadota</taxon>
        <taxon>Gammaproteobacteria</taxon>
        <taxon>Enterobacterales</taxon>
        <taxon>Enterobacteriaceae</taxon>
        <taxon>Escherichia</taxon>
    </lineage>
</organism>
<feature type="chain" id="PRO_1000199067" description="Cysteine--tRNA ligase">
    <location>
        <begin position="1"/>
        <end position="461"/>
    </location>
</feature>
<feature type="short sequence motif" description="'HIGH' region">
    <location>
        <begin position="30"/>
        <end position="40"/>
    </location>
</feature>
<feature type="short sequence motif" description="'KMSKS' region">
    <location>
        <begin position="266"/>
        <end position="270"/>
    </location>
</feature>
<feature type="binding site" evidence="1">
    <location>
        <position position="28"/>
    </location>
    <ligand>
        <name>Zn(2+)</name>
        <dbReference type="ChEBI" id="CHEBI:29105"/>
    </ligand>
</feature>
<feature type="binding site" evidence="1">
    <location>
        <position position="209"/>
    </location>
    <ligand>
        <name>Zn(2+)</name>
        <dbReference type="ChEBI" id="CHEBI:29105"/>
    </ligand>
</feature>
<feature type="binding site" evidence="1">
    <location>
        <position position="234"/>
    </location>
    <ligand>
        <name>Zn(2+)</name>
        <dbReference type="ChEBI" id="CHEBI:29105"/>
    </ligand>
</feature>
<feature type="binding site" evidence="1">
    <location>
        <position position="238"/>
    </location>
    <ligand>
        <name>Zn(2+)</name>
        <dbReference type="ChEBI" id="CHEBI:29105"/>
    </ligand>
</feature>
<feature type="binding site" evidence="1">
    <location>
        <position position="269"/>
    </location>
    <ligand>
        <name>ATP</name>
        <dbReference type="ChEBI" id="CHEBI:30616"/>
    </ligand>
</feature>
<accession>B7NL20</accession>
<name>SYC_ECO7I</name>
<evidence type="ECO:0000255" key="1">
    <source>
        <dbReference type="HAMAP-Rule" id="MF_00041"/>
    </source>
</evidence>
<protein>
    <recommendedName>
        <fullName evidence="1">Cysteine--tRNA ligase</fullName>
        <ecNumber evidence="1">6.1.1.16</ecNumber>
    </recommendedName>
    <alternativeName>
        <fullName evidence="1">Cysteinyl-tRNA synthetase</fullName>
        <shortName evidence="1">CysRS</shortName>
    </alternativeName>
</protein>
<proteinExistence type="inferred from homology"/>